<evidence type="ECO:0000250" key="1">
    <source>
        <dbReference type="UniProtKB" id="B7KMS4"/>
    </source>
</evidence>
<evidence type="ECO:0000250" key="2">
    <source>
        <dbReference type="UniProtKB" id="Q8GJM5"/>
    </source>
</evidence>
<evidence type="ECO:0000269" key="3">
    <source>
    </source>
</evidence>
<evidence type="ECO:0000303" key="4">
    <source>
    </source>
</evidence>
<evidence type="ECO:0000303" key="5">
    <source>
    </source>
</evidence>
<evidence type="ECO:0000305" key="6"/>
<evidence type="ECO:0000312" key="7">
    <source>
        <dbReference type="EMBL" id="AGY56916.1"/>
    </source>
</evidence>
<gene>
    <name evidence="4" type="primary">mcdA</name>
    <name evidence="7" type="synonym">parA</name>
    <name evidence="7" type="ORF">GKIL_0670</name>
</gene>
<comment type="function">
    <text evidence="2">McdA and McdB together mediate carboxysome (Cb) spacing, size, ultrastructure and probably inheritance in the cell, together they prevent Cb aggregation (By similarity). McdA is an ATPase that forms dynamic gradients on the nucleoid in response to adapter protein McdB, which associates with carboxysomes. The interplay between McdA gradients on the nucleoid and McdB-bound carboxysomes result in the equal spacing of Cbs along the cell length (By similarity).</text>
</comment>
<comment type="function">
    <text evidence="2">Incorrect positioning (aggregation) of carboxysomes results in reduced CO(2) fixation by encapsulated ribulose-1,5-bisphosphate carboxylase (RuBisCO, cbbL/cbbS), which leads to slower growth.</text>
</comment>
<comment type="catalytic activity">
    <reaction evidence="2">
        <text>ATP + H2O = ADP + phosphate + H(+)</text>
        <dbReference type="Rhea" id="RHEA:13065"/>
        <dbReference type="ChEBI" id="CHEBI:15377"/>
        <dbReference type="ChEBI" id="CHEBI:15378"/>
        <dbReference type="ChEBI" id="CHEBI:30616"/>
        <dbReference type="ChEBI" id="CHEBI:43474"/>
        <dbReference type="ChEBI" id="CHEBI:456216"/>
    </reaction>
</comment>
<comment type="subunit">
    <text evidence="1">Homodimerizes in the presence of ATP. Each subunit binds 1 ATP molecule; some residues cross the dimer interface to contact ATP in the other subunit. Forms a complex with McdB.</text>
</comment>
<comment type="subcellular location">
    <subcellularLocation>
        <location evidence="2">Cytoplasm</location>
    </subcellularLocation>
    <subcellularLocation>
        <location evidence="2">Cytoplasm</location>
        <location evidence="2">Nucleoid</location>
    </subcellularLocation>
</comment>
<comment type="domain">
    <text evidence="1">Has an adenine-nucleotide sandwich dimer structure in common with ParA ATPases. Nucleotide-binding forces changes that create an ATP-binding pocket.</text>
</comment>
<comment type="miscellaneous">
    <text evidence="5">A type 2 McdA protein.</text>
</comment>
<comment type="similarity">
    <text evidence="6">Belongs to the ParA family. McdA subfamily.</text>
</comment>
<keyword id="KW-0067">ATP-binding</keyword>
<keyword id="KW-0120">Carbon dioxide fixation</keyword>
<keyword id="KW-0963">Cytoplasm</keyword>
<keyword id="KW-0378">Hydrolase</keyword>
<keyword id="KW-0460">Magnesium</keyword>
<keyword id="KW-0479">Metal-binding</keyword>
<keyword id="KW-0547">Nucleotide-binding</keyword>
<keyword id="KW-1185">Reference proteome</keyword>
<name>MCDA_GLOK1</name>
<accession>U5QDF4</accession>
<sequence length="216" mass="23202">MGPSSSYPRVVAVLNGKGGVGKTTTAVNLAAALAAKERVLLVDADPQGSASWWAERGTAALGFDLAQETNPRLLESLREVGGYSLVVVDTPPALDSAALAAVVQAADQLVLPTPPAPLDLAVLIETVHRAVLPSGTSHRVLLTRVDPRSLGEAVEAQRTLRERGIPAFEAFIRAYKAHERAALEGLSILQWRGKNAREAEADYRRVAEELDRDWRK</sequence>
<reference evidence="7" key="1">
    <citation type="journal article" date="2013" name="PLoS ONE">
        <title>Cultivation and Complete Genome Sequencing of Gloeobacter kilaueensis sp. nov., from a Lava Cave in Kilauea Caldera, Hawai'i.</title>
        <authorList>
            <person name="Saw J.H."/>
            <person name="Schatz M."/>
            <person name="Brown M.V."/>
            <person name="Kunkel D.D."/>
            <person name="Foster J.S."/>
            <person name="Shick H."/>
            <person name="Christensen S."/>
            <person name="Hou S."/>
            <person name="Wan X."/>
            <person name="Donachie S.P."/>
        </authorList>
    </citation>
    <scope>NUCLEOTIDE SEQUENCE [LARGE SCALE GENOMIC DNA]</scope>
    <source>
        <strain>ATCC BAA-2537 / CCAP 1431/1 / ULC 316 / JS1</strain>
    </source>
</reference>
<reference key="2">
    <citation type="journal article" date="2018" name="Elife">
        <title>Protein gradients on the nucleoid position the carbon-fixing organelles of cyanobacteria.</title>
        <authorList>
            <person name="MacCready J.S."/>
            <person name="Hakim P."/>
            <person name="Young E.J."/>
            <person name="Hu L."/>
            <person name="Liu J."/>
            <person name="Osteryoung K.W."/>
            <person name="Vecchiarelli A.G."/>
            <person name="Ducat D.C."/>
        </authorList>
    </citation>
    <scope>IDENTIFICATION</scope>
    <source>
        <strain>ATCC BAA-2537 / CCAP 1431/1 / ULC 316 / JS1</strain>
    </source>
</reference>
<reference key="3">
    <citation type="journal article" date="2020" name="Mol. Biol. Evol.">
        <title>Origin and Evolution of Carboxysome Positioning Systems in Cyanobacteria.</title>
        <authorList>
            <person name="MacCready J.S."/>
            <person name="Basalla J.L."/>
            <person name="Vecchiarelli A.G."/>
        </authorList>
    </citation>
    <scope>CLASSIFICATION</scope>
    <source>
        <strain>ATCC BAA-2537 / CCAP 1431/1 / ULC 316 / JS1</strain>
    </source>
</reference>
<proteinExistence type="inferred from homology"/>
<organism>
    <name type="scientific">Gloeobacter kilaueensis (strain ATCC BAA-2537 / CCAP 1431/1 / ULC 316 / JS1)</name>
    <dbReference type="NCBI Taxonomy" id="1183438"/>
    <lineage>
        <taxon>Bacteria</taxon>
        <taxon>Bacillati</taxon>
        <taxon>Cyanobacteriota</taxon>
        <taxon>Cyanophyceae</taxon>
        <taxon>Gloeobacterales</taxon>
        <taxon>Gloeobacteraceae</taxon>
        <taxon>Gloeobacter</taxon>
    </lineage>
</organism>
<protein>
    <recommendedName>
        <fullName evidence="4">Maintenance of carboxysome distribution protein A</fullName>
        <shortName evidence="4">McdA</shortName>
        <ecNumber evidence="3">3.6.4.-</ecNumber>
    </recommendedName>
</protein>
<dbReference type="EC" id="3.6.4.-" evidence="3"/>
<dbReference type="EMBL" id="CP003587">
    <property type="protein sequence ID" value="AGY56916.1"/>
    <property type="molecule type" value="Genomic_DNA"/>
</dbReference>
<dbReference type="RefSeq" id="WP_023171957.1">
    <property type="nucleotide sequence ID" value="NC_022600.1"/>
</dbReference>
<dbReference type="SMR" id="U5QDF4"/>
<dbReference type="STRING" id="1183438.GKIL_0670"/>
<dbReference type="KEGG" id="glj:GKIL_0670"/>
<dbReference type="PATRIC" id="fig|1183438.3.peg.667"/>
<dbReference type="eggNOG" id="COG1192">
    <property type="taxonomic scope" value="Bacteria"/>
</dbReference>
<dbReference type="HOGENOM" id="CLU_037612_5_6_3"/>
<dbReference type="OrthoDB" id="3173068at2"/>
<dbReference type="Proteomes" id="UP000017396">
    <property type="component" value="Chromosome"/>
</dbReference>
<dbReference type="GO" id="GO:0005737">
    <property type="term" value="C:cytoplasm"/>
    <property type="evidence" value="ECO:0007669"/>
    <property type="project" value="UniProtKB-SubCell"/>
</dbReference>
<dbReference type="GO" id="GO:0009295">
    <property type="term" value="C:nucleoid"/>
    <property type="evidence" value="ECO:0007669"/>
    <property type="project" value="UniProtKB-SubCell"/>
</dbReference>
<dbReference type="GO" id="GO:0005524">
    <property type="term" value="F:ATP binding"/>
    <property type="evidence" value="ECO:0007669"/>
    <property type="project" value="UniProtKB-KW"/>
</dbReference>
<dbReference type="GO" id="GO:0016887">
    <property type="term" value="F:ATP hydrolysis activity"/>
    <property type="evidence" value="ECO:0007669"/>
    <property type="project" value="InterPro"/>
</dbReference>
<dbReference type="GO" id="GO:0046872">
    <property type="term" value="F:metal ion binding"/>
    <property type="evidence" value="ECO:0007669"/>
    <property type="project" value="UniProtKB-KW"/>
</dbReference>
<dbReference type="GO" id="GO:0015977">
    <property type="term" value="P:carbon fixation"/>
    <property type="evidence" value="ECO:0007669"/>
    <property type="project" value="UniProtKB-KW"/>
</dbReference>
<dbReference type="CDD" id="cd02042">
    <property type="entry name" value="ParAB_family"/>
    <property type="match status" value="1"/>
</dbReference>
<dbReference type="Gene3D" id="3.40.50.300">
    <property type="entry name" value="P-loop containing nucleotide triphosphate hydrolases"/>
    <property type="match status" value="1"/>
</dbReference>
<dbReference type="InterPro" id="IPR003593">
    <property type="entry name" value="AAA+_ATPase"/>
</dbReference>
<dbReference type="InterPro" id="IPR002586">
    <property type="entry name" value="CobQ/CobB/MinD/ParA_Nub-bd_dom"/>
</dbReference>
<dbReference type="InterPro" id="IPR050678">
    <property type="entry name" value="DNA_Partitioning_ATPase"/>
</dbReference>
<dbReference type="InterPro" id="IPR027417">
    <property type="entry name" value="P-loop_NTPase"/>
</dbReference>
<dbReference type="PANTHER" id="PTHR13696">
    <property type="entry name" value="P-LOOP CONTAINING NUCLEOSIDE TRIPHOSPHATE HYDROLASE"/>
    <property type="match status" value="1"/>
</dbReference>
<dbReference type="PANTHER" id="PTHR13696:SF52">
    <property type="entry name" value="PARA FAMILY PROTEIN CT_582"/>
    <property type="match status" value="1"/>
</dbReference>
<dbReference type="Pfam" id="PF01656">
    <property type="entry name" value="CbiA"/>
    <property type="match status" value="1"/>
</dbReference>
<dbReference type="PIRSF" id="PIRSF009320">
    <property type="entry name" value="Nuc_binding_HP_1000"/>
    <property type="match status" value="1"/>
</dbReference>
<dbReference type="SMART" id="SM00382">
    <property type="entry name" value="AAA"/>
    <property type="match status" value="1"/>
</dbReference>
<dbReference type="SUPFAM" id="SSF52540">
    <property type="entry name" value="P-loop containing nucleoside triphosphate hydrolases"/>
    <property type="match status" value="1"/>
</dbReference>
<feature type="chain" id="PRO_0000459775" description="Maintenance of carboxysome distribution protein A">
    <location>
        <begin position="1"/>
        <end position="216"/>
    </location>
</feature>
<feature type="binding site" evidence="1">
    <location>
        <position position="18"/>
    </location>
    <ligand>
        <name>ATP</name>
        <dbReference type="ChEBI" id="CHEBI:30616"/>
    </ligand>
</feature>
<feature type="binding site" evidence="1">
    <location>
        <position position="19"/>
    </location>
    <ligand>
        <name>ATP</name>
        <dbReference type="ChEBI" id="CHEBI:30616"/>
    </ligand>
</feature>
<feature type="binding site" evidence="1">
    <location>
        <position position="21"/>
    </location>
    <ligand>
        <name>ATP</name>
        <dbReference type="ChEBI" id="CHEBI:30616"/>
    </ligand>
</feature>
<feature type="binding site" evidence="1">
    <location>
        <position position="22"/>
    </location>
    <ligand>
        <name>ATP</name>
        <dbReference type="ChEBI" id="CHEBI:30616"/>
    </ligand>
</feature>
<feature type="binding site" evidence="1">
    <location>
        <position position="23"/>
    </location>
    <ligand>
        <name>ATP</name>
        <dbReference type="ChEBI" id="CHEBI:30616"/>
    </ligand>
</feature>
<feature type="binding site" evidence="1">
    <location>
        <position position="23"/>
    </location>
    <ligand>
        <name>Mg(2+)</name>
        <dbReference type="ChEBI" id="CHEBI:18420"/>
    </ligand>
</feature>
<feature type="binding site" evidence="1">
    <location>
        <position position="24"/>
    </location>
    <ligand>
        <name>ATP</name>
        <dbReference type="ChEBI" id="CHEBI:30616"/>
    </ligand>
</feature>
<feature type="binding site" evidence="1">
    <location>
        <position position="47"/>
    </location>
    <ligand>
        <name>ATP</name>
        <dbReference type="ChEBI" id="CHEBI:30616"/>
    </ligand>
</feature>